<dbReference type="EMBL" id="CU329672">
    <property type="protein sequence ID" value="CAB76223.1"/>
    <property type="molecule type" value="Genomic_DNA"/>
</dbReference>
<dbReference type="PIR" id="T50421">
    <property type="entry name" value="T50421"/>
</dbReference>
<dbReference type="RefSeq" id="NP_588017.1">
    <property type="nucleotide sequence ID" value="NM_001023008.2"/>
</dbReference>
<dbReference type="SMR" id="Q9P7J2"/>
<dbReference type="BioGRID" id="275768">
    <property type="interactions" value="10"/>
</dbReference>
<dbReference type="FunCoup" id="Q9P7J2">
    <property type="interactions" value="1"/>
</dbReference>
<dbReference type="STRING" id="284812.Q9P7J2"/>
<dbReference type="iPTMnet" id="Q9P7J2"/>
<dbReference type="PaxDb" id="4896-SPCC24B10.14c.1"/>
<dbReference type="EnsemblFungi" id="SPCC24B10.14c.1">
    <property type="protein sequence ID" value="SPCC24B10.14c.1:pep"/>
    <property type="gene ID" value="SPCC24B10.14c"/>
</dbReference>
<dbReference type="PomBase" id="SPCC24B10.14c">
    <property type="gene designation" value="xlf1"/>
</dbReference>
<dbReference type="VEuPathDB" id="FungiDB:SPCC24B10.14c"/>
<dbReference type="eggNOG" id="ENOG502RNP9">
    <property type="taxonomic scope" value="Eukaryota"/>
</dbReference>
<dbReference type="HOGENOM" id="CLU_1283923_0_0_1"/>
<dbReference type="InParanoid" id="Q9P7J2"/>
<dbReference type="OMA" id="SKLIWFP"/>
<dbReference type="PRO" id="PR:Q9P7J2"/>
<dbReference type="Proteomes" id="UP000002485">
    <property type="component" value="Chromosome III"/>
</dbReference>
<dbReference type="GO" id="GO:0032807">
    <property type="term" value="C:DNA ligase IV complex"/>
    <property type="evidence" value="ECO:0000304"/>
    <property type="project" value="PomBase"/>
</dbReference>
<dbReference type="GO" id="GO:0005634">
    <property type="term" value="C:nucleus"/>
    <property type="evidence" value="ECO:0007005"/>
    <property type="project" value="PomBase"/>
</dbReference>
<dbReference type="GO" id="GO:0003677">
    <property type="term" value="F:DNA binding"/>
    <property type="evidence" value="ECO:0000314"/>
    <property type="project" value="PomBase"/>
</dbReference>
<dbReference type="GO" id="GO:0006302">
    <property type="term" value="P:double-strand break repair"/>
    <property type="evidence" value="ECO:0000315"/>
    <property type="project" value="PomBase"/>
</dbReference>
<dbReference type="GO" id="GO:0097680">
    <property type="term" value="P:double-strand break repair via classical nonhomologous end joining"/>
    <property type="evidence" value="ECO:0000315"/>
    <property type="project" value="PomBase"/>
</dbReference>
<dbReference type="GO" id="GO:0006303">
    <property type="term" value="P:double-strand break repair via nonhomologous end joining"/>
    <property type="evidence" value="ECO:0000316"/>
    <property type="project" value="PomBase"/>
</dbReference>
<dbReference type="CDD" id="cd22285">
    <property type="entry name" value="HD_XLF_N"/>
    <property type="match status" value="1"/>
</dbReference>
<dbReference type="Gene3D" id="2.170.210.10">
    <property type="entry name" value="DNA double-strand break repair and VJ recombination XRCC4, N-terminal"/>
    <property type="match status" value="1"/>
</dbReference>
<dbReference type="InterPro" id="IPR053829">
    <property type="entry name" value="XLF-like_CC"/>
</dbReference>
<dbReference type="InterPro" id="IPR015381">
    <property type="entry name" value="XLF-like_N"/>
</dbReference>
<dbReference type="InterPro" id="IPR038051">
    <property type="entry name" value="XRCC4-like_N_sf"/>
</dbReference>
<dbReference type="Pfam" id="PF09302">
    <property type="entry name" value="XLF"/>
    <property type="match status" value="1"/>
</dbReference>
<dbReference type="Pfam" id="PF21928">
    <property type="entry name" value="XLF_CC"/>
    <property type="match status" value="1"/>
</dbReference>
<protein>
    <recommendedName>
        <fullName>Xrcc4-like factor 1</fullName>
    </recommendedName>
    <alternativeName>
        <fullName>Meiotically up-regulated gene 104 protein</fullName>
    </alternativeName>
    <alternativeName>
        <fullName>Non-homologous end-joining protein 1</fullName>
    </alternativeName>
</protein>
<accession>Q9P7J2</accession>
<keyword id="KW-0227">DNA damage</keyword>
<keyword id="KW-0234">DNA repair</keyword>
<keyword id="KW-0539">Nucleus</keyword>
<keyword id="KW-1185">Reference proteome</keyword>
<feature type="chain" id="PRO_0000116816" description="Xrcc4-like factor 1">
    <location>
        <begin position="1"/>
        <end position="203"/>
    </location>
</feature>
<proteinExistence type="evidence at protein level"/>
<reference key="1">
    <citation type="journal article" date="2002" name="Nature">
        <title>The genome sequence of Schizosaccharomyces pombe.</title>
        <authorList>
            <person name="Wood V."/>
            <person name="Gwilliam R."/>
            <person name="Rajandream M.A."/>
            <person name="Lyne M.H."/>
            <person name="Lyne R."/>
            <person name="Stewart A."/>
            <person name="Sgouros J.G."/>
            <person name="Peat N."/>
            <person name="Hayles J."/>
            <person name="Baker S.G."/>
            <person name="Basham D."/>
            <person name="Bowman S."/>
            <person name="Brooks K."/>
            <person name="Brown D."/>
            <person name="Brown S."/>
            <person name="Chillingworth T."/>
            <person name="Churcher C.M."/>
            <person name="Collins M."/>
            <person name="Connor R."/>
            <person name="Cronin A."/>
            <person name="Davis P."/>
            <person name="Feltwell T."/>
            <person name="Fraser A."/>
            <person name="Gentles S."/>
            <person name="Goble A."/>
            <person name="Hamlin N."/>
            <person name="Harris D.E."/>
            <person name="Hidalgo J."/>
            <person name="Hodgson G."/>
            <person name="Holroyd S."/>
            <person name="Hornsby T."/>
            <person name="Howarth S."/>
            <person name="Huckle E.J."/>
            <person name="Hunt S."/>
            <person name="Jagels K."/>
            <person name="James K.D."/>
            <person name="Jones L."/>
            <person name="Jones M."/>
            <person name="Leather S."/>
            <person name="McDonald S."/>
            <person name="McLean J."/>
            <person name="Mooney P."/>
            <person name="Moule S."/>
            <person name="Mungall K.L."/>
            <person name="Murphy L.D."/>
            <person name="Niblett D."/>
            <person name="Odell C."/>
            <person name="Oliver K."/>
            <person name="O'Neil S."/>
            <person name="Pearson D."/>
            <person name="Quail M.A."/>
            <person name="Rabbinowitsch E."/>
            <person name="Rutherford K.M."/>
            <person name="Rutter S."/>
            <person name="Saunders D."/>
            <person name="Seeger K."/>
            <person name="Sharp S."/>
            <person name="Skelton J."/>
            <person name="Simmonds M.N."/>
            <person name="Squares R."/>
            <person name="Squares S."/>
            <person name="Stevens K."/>
            <person name="Taylor K."/>
            <person name="Taylor R.G."/>
            <person name="Tivey A."/>
            <person name="Walsh S.V."/>
            <person name="Warren T."/>
            <person name="Whitehead S."/>
            <person name="Woodward J.R."/>
            <person name="Volckaert G."/>
            <person name="Aert R."/>
            <person name="Robben J."/>
            <person name="Grymonprez B."/>
            <person name="Weltjens I."/>
            <person name="Vanstreels E."/>
            <person name="Rieger M."/>
            <person name="Schaefer M."/>
            <person name="Mueller-Auer S."/>
            <person name="Gabel C."/>
            <person name="Fuchs M."/>
            <person name="Duesterhoeft A."/>
            <person name="Fritzc C."/>
            <person name="Holzer E."/>
            <person name="Moestl D."/>
            <person name="Hilbert H."/>
            <person name="Borzym K."/>
            <person name="Langer I."/>
            <person name="Beck A."/>
            <person name="Lehrach H."/>
            <person name="Reinhardt R."/>
            <person name="Pohl T.M."/>
            <person name="Eger P."/>
            <person name="Zimmermann W."/>
            <person name="Wedler H."/>
            <person name="Wambutt R."/>
            <person name="Purnelle B."/>
            <person name="Goffeau A."/>
            <person name="Cadieu E."/>
            <person name="Dreano S."/>
            <person name="Gloux S."/>
            <person name="Lelaure V."/>
            <person name="Mottier S."/>
            <person name="Galibert F."/>
            <person name="Aves S.J."/>
            <person name="Xiang Z."/>
            <person name="Hunt C."/>
            <person name="Moore K."/>
            <person name="Hurst S.M."/>
            <person name="Lucas M."/>
            <person name="Rochet M."/>
            <person name="Gaillardin C."/>
            <person name="Tallada V.A."/>
            <person name="Garzon A."/>
            <person name="Thode G."/>
            <person name="Daga R.R."/>
            <person name="Cruzado L."/>
            <person name="Jimenez J."/>
            <person name="Sanchez M."/>
            <person name="del Rey F."/>
            <person name="Benito J."/>
            <person name="Dominguez A."/>
            <person name="Revuelta J.L."/>
            <person name="Moreno S."/>
            <person name="Armstrong J."/>
            <person name="Forsburg S.L."/>
            <person name="Cerutti L."/>
            <person name="Lowe T."/>
            <person name="McCombie W.R."/>
            <person name="Paulsen I."/>
            <person name="Potashkin J."/>
            <person name="Shpakovski G.V."/>
            <person name="Ussery D."/>
            <person name="Barrell B.G."/>
            <person name="Nurse P."/>
        </authorList>
    </citation>
    <scope>NUCLEOTIDE SEQUENCE [LARGE SCALE GENOMIC DNA]</scope>
    <source>
        <strain>972 / ATCC 24843</strain>
    </source>
</reference>
<reference key="2">
    <citation type="journal article" date="2005" name="Curr. Biol.">
        <title>A large-scale screen in S. pombe identifies seven novel genes required for critical meiotic events.</title>
        <authorList>
            <person name="Martin-Castellanos C."/>
            <person name="Blanco M."/>
            <person name="Rozalen A.E."/>
            <person name="Perez-Hidalgo L."/>
            <person name="Garcia A.I."/>
            <person name="Conde F."/>
            <person name="Mata J."/>
            <person name="Ellermeier C."/>
            <person name="Davis L."/>
            <person name="San-Segundo P."/>
            <person name="Smith G.R."/>
            <person name="Moreno S."/>
        </authorList>
    </citation>
    <scope>FUNCTION IN MEIOSIS</scope>
</reference>
<reference key="3">
    <citation type="journal article" date="2007" name="Genetics">
        <title>Xlf1 is required for DNA repair by nonhomologous end joining in Schizosaccharomyces pombe.</title>
        <authorList>
            <person name="Cavero S."/>
            <person name="Chahwan C."/>
            <person name="Russell P."/>
        </authorList>
    </citation>
    <scope>FUNCTION</scope>
</reference>
<reference key="4">
    <citation type="journal article" date="2006" name="Nat. Biotechnol.">
        <title>ORFeome cloning and global analysis of protein localization in the fission yeast Schizosaccharomyces pombe.</title>
        <authorList>
            <person name="Matsuyama A."/>
            <person name="Arai R."/>
            <person name="Yashiroda Y."/>
            <person name="Shirai A."/>
            <person name="Kamata A."/>
            <person name="Sekido S."/>
            <person name="Kobayashi Y."/>
            <person name="Hashimoto A."/>
            <person name="Hamamoto M."/>
            <person name="Hiraoka Y."/>
            <person name="Horinouchi S."/>
            <person name="Yoshida M."/>
        </authorList>
    </citation>
    <scope>SUBCELLULAR LOCATION [LARGE SCALE ANALYSIS]</scope>
</reference>
<reference key="5">
    <citation type="journal article" date="2014" name="G3 (Bethesda)">
        <title>Genome-wide screens for sensitivity to ionizing radiation identify the fission yeast nonhomologous end joining factor Xrc4.</title>
        <authorList>
            <person name="Li J."/>
            <person name="Yu Y."/>
            <person name="Suo F."/>
            <person name="Sun L.L."/>
            <person name="Zhao D."/>
            <person name="Du L.L."/>
        </authorList>
    </citation>
    <scope>FUNCTION</scope>
    <scope>DISRUPTION PHENOTYPE</scope>
</reference>
<comment type="function">
    <text evidence="1 3 4">Involved in double-strand break repair via non-homologous end joining (NHEJ); the repair of a double-strand break in DNA in which the two broken ends are rejoined with little or no sequence complementarity (PubMed:17151234, PubMed:24847916). Has a role in meiosis (PubMed:16303567).</text>
</comment>
<comment type="subcellular location">
    <subcellularLocation>
        <location evidence="2">Nucleus</location>
    </subcellularLocation>
</comment>
<comment type="disruption phenotype">
    <text evidence="4">Spores sensitive to ionizing radiation.</text>
</comment>
<comment type="similarity">
    <text evidence="5">Belongs to the XRCC4-XLF family. XLF subfamily.</text>
</comment>
<evidence type="ECO:0000269" key="1">
    <source>
    </source>
</evidence>
<evidence type="ECO:0000269" key="2">
    <source>
    </source>
</evidence>
<evidence type="ECO:0000269" key="3">
    <source>
    </source>
</evidence>
<evidence type="ECO:0000269" key="4">
    <source>
    </source>
</evidence>
<evidence type="ECO:0000305" key="5"/>
<name>NHEJ1_SCHPO</name>
<gene>
    <name type="primary">xlf1</name>
    <name type="synonym">mug104</name>
    <name type="synonym">nej1</name>
    <name type="ORF">SPCC24B10.14c</name>
</gene>
<organism>
    <name type="scientific">Schizosaccharomyces pombe (strain 972 / ATCC 24843)</name>
    <name type="common">Fission yeast</name>
    <dbReference type="NCBI Taxonomy" id="284812"/>
    <lineage>
        <taxon>Eukaryota</taxon>
        <taxon>Fungi</taxon>
        <taxon>Dikarya</taxon>
        <taxon>Ascomycota</taxon>
        <taxon>Taphrinomycotina</taxon>
        <taxon>Schizosaccharomycetes</taxon>
        <taxon>Schizosaccharomycetales</taxon>
        <taxon>Schizosaccharomycetaceae</taxon>
        <taxon>Schizosaccharomyces</taxon>
    </lineage>
</organism>
<sequence length="203" mass="23434">MSWVQLRGHRFHFIQASFDAESNEAVQVIHITDLVRVWSCTCSRNQIVNQAESERCPIDPFQTFETLVDVLAEVLVNVSSESRIQLRGSNDEGSLKIFCTSKIAKDIFLEWNWTLWLTPPETIAKMVWFPLINHHLFESETDTSPGSLMSIIRDQKSLLNDKTWFKEALNERSSSSNPSTPRKRSAFADIISPKRPRTRYDFV</sequence>